<keyword id="KW-0066">ATP synthesis</keyword>
<keyword id="KW-0997">Cell inner membrane</keyword>
<keyword id="KW-1003">Cell membrane</keyword>
<keyword id="KW-0138">CF(0)</keyword>
<keyword id="KW-0375">Hydrogen ion transport</keyword>
<keyword id="KW-0406">Ion transport</keyword>
<keyword id="KW-0472">Membrane</keyword>
<keyword id="KW-0812">Transmembrane</keyword>
<keyword id="KW-1133">Transmembrane helix</keyword>
<keyword id="KW-0813">Transport</keyword>
<gene>
    <name evidence="1" type="primary">atpB</name>
    <name type="ordered locus">M446_6944</name>
</gene>
<evidence type="ECO:0000255" key="1">
    <source>
        <dbReference type="HAMAP-Rule" id="MF_01393"/>
    </source>
</evidence>
<dbReference type="EMBL" id="CP000943">
    <property type="protein sequence ID" value="ACA21178.1"/>
    <property type="molecule type" value="Genomic_DNA"/>
</dbReference>
<dbReference type="RefSeq" id="WP_012336550.1">
    <property type="nucleotide sequence ID" value="NC_010511.1"/>
</dbReference>
<dbReference type="SMR" id="B0ULY1"/>
<dbReference type="STRING" id="426117.M446_6944"/>
<dbReference type="KEGG" id="met:M446_6944"/>
<dbReference type="eggNOG" id="COG0356">
    <property type="taxonomic scope" value="Bacteria"/>
</dbReference>
<dbReference type="HOGENOM" id="CLU_041018_0_2_5"/>
<dbReference type="GO" id="GO:0005886">
    <property type="term" value="C:plasma membrane"/>
    <property type="evidence" value="ECO:0007669"/>
    <property type="project" value="UniProtKB-SubCell"/>
</dbReference>
<dbReference type="GO" id="GO:0045259">
    <property type="term" value="C:proton-transporting ATP synthase complex"/>
    <property type="evidence" value="ECO:0007669"/>
    <property type="project" value="UniProtKB-KW"/>
</dbReference>
<dbReference type="GO" id="GO:0046933">
    <property type="term" value="F:proton-transporting ATP synthase activity, rotational mechanism"/>
    <property type="evidence" value="ECO:0007669"/>
    <property type="project" value="UniProtKB-UniRule"/>
</dbReference>
<dbReference type="CDD" id="cd00310">
    <property type="entry name" value="ATP-synt_Fo_a_6"/>
    <property type="match status" value="1"/>
</dbReference>
<dbReference type="FunFam" id="1.20.120.220:FF:000003">
    <property type="entry name" value="ATP synthase subunit a"/>
    <property type="match status" value="1"/>
</dbReference>
<dbReference type="Gene3D" id="1.20.120.220">
    <property type="entry name" value="ATP synthase, F0 complex, subunit A"/>
    <property type="match status" value="1"/>
</dbReference>
<dbReference type="HAMAP" id="MF_01393">
    <property type="entry name" value="ATP_synth_a_bact"/>
    <property type="match status" value="1"/>
</dbReference>
<dbReference type="InterPro" id="IPR000568">
    <property type="entry name" value="ATP_synth_F0_asu"/>
</dbReference>
<dbReference type="InterPro" id="IPR023011">
    <property type="entry name" value="ATP_synth_F0_asu_AS"/>
</dbReference>
<dbReference type="InterPro" id="IPR045083">
    <property type="entry name" value="ATP_synth_F0_asu_bact/mt"/>
</dbReference>
<dbReference type="InterPro" id="IPR035908">
    <property type="entry name" value="F0_ATP_A_sf"/>
</dbReference>
<dbReference type="NCBIfam" id="TIGR01131">
    <property type="entry name" value="ATP_synt_6_or_A"/>
    <property type="match status" value="1"/>
</dbReference>
<dbReference type="NCBIfam" id="NF004482">
    <property type="entry name" value="PRK05815.2-4"/>
    <property type="match status" value="1"/>
</dbReference>
<dbReference type="PANTHER" id="PTHR11410">
    <property type="entry name" value="ATP SYNTHASE SUBUNIT A"/>
    <property type="match status" value="1"/>
</dbReference>
<dbReference type="PANTHER" id="PTHR11410:SF0">
    <property type="entry name" value="ATP SYNTHASE SUBUNIT A"/>
    <property type="match status" value="1"/>
</dbReference>
<dbReference type="Pfam" id="PF00119">
    <property type="entry name" value="ATP-synt_A"/>
    <property type="match status" value="1"/>
</dbReference>
<dbReference type="PRINTS" id="PR00123">
    <property type="entry name" value="ATPASEA"/>
</dbReference>
<dbReference type="SUPFAM" id="SSF81336">
    <property type="entry name" value="F1F0 ATP synthase subunit A"/>
    <property type="match status" value="1"/>
</dbReference>
<dbReference type="PROSITE" id="PS00449">
    <property type="entry name" value="ATPASE_A"/>
    <property type="match status" value="1"/>
</dbReference>
<name>ATP6_METS4</name>
<accession>B0ULY1</accession>
<organism>
    <name type="scientific">Methylobacterium sp. (strain 4-46)</name>
    <dbReference type="NCBI Taxonomy" id="426117"/>
    <lineage>
        <taxon>Bacteria</taxon>
        <taxon>Pseudomonadati</taxon>
        <taxon>Pseudomonadota</taxon>
        <taxon>Alphaproteobacteria</taxon>
        <taxon>Hyphomicrobiales</taxon>
        <taxon>Methylobacteriaceae</taxon>
        <taxon>Methylobacterium</taxon>
    </lineage>
</organism>
<comment type="function">
    <text evidence="1">Key component of the proton channel; it plays a direct role in the translocation of protons across the membrane.</text>
</comment>
<comment type="subunit">
    <text evidence="1">F-type ATPases have 2 components, CF(1) - the catalytic core - and CF(0) - the membrane proton channel. CF(1) has five subunits: alpha(3), beta(3), gamma(1), delta(1), epsilon(1). CF(0) has three main subunits: a(1), b(2) and c(9-12). The alpha and beta chains form an alternating ring which encloses part of the gamma chain. CF(1) is attached to CF(0) by a central stalk formed by the gamma and epsilon chains, while a peripheral stalk is formed by the delta and b chains.</text>
</comment>
<comment type="subcellular location">
    <subcellularLocation>
        <location evidence="1">Cell inner membrane</location>
        <topology evidence="1">Multi-pass membrane protein</topology>
    </subcellularLocation>
</comment>
<comment type="similarity">
    <text evidence="1">Belongs to the ATPase A chain family.</text>
</comment>
<feature type="chain" id="PRO_0000362346" description="ATP synthase subunit a">
    <location>
        <begin position="1"/>
        <end position="251"/>
    </location>
</feature>
<feature type="transmembrane region" description="Helical" evidence="1">
    <location>
        <begin position="29"/>
        <end position="49"/>
    </location>
</feature>
<feature type="transmembrane region" description="Helical" evidence="1">
    <location>
        <begin position="56"/>
        <end position="73"/>
    </location>
</feature>
<feature type="transmembrane region" description="Helical" evidence="1">
    <location>
        <begin position="87"/>
        <end position="107"/>
    </location>
</feature>
<feature type="transmembrane region" description="Helical" evidence="1">
    <location>
        <begin position="117"/>
        <end position="137"/>
    </location>
</feature>
<feature type="transmembrane region" description="Helical" evidence="1">
    <location>
        <begin position="159"/>
        <end position="181"/>
    </location>
</feature>
<feature type="transmembrane region" description="Helical" evidence="1">
    <location>
        <begin position="192"/>
        <end position="212"/>
    </location>
</feature>
<feature type="transmembrane region" description="Helical" evidence="1">
    <location>
        <begin position="218"/>
        <end position="238"/>
    </location>
</feature>
<sequence>MAVKLDPIHQFELKPLVSFGHIGHQHIAFTQSALYMFAAVGIIALITLVATRQRALVPGRMQSLAEAFYEFIASTVHQSAGHGSERFVPLVFSLFMFVLVLNLFGMIPYAFTVTSHIIVTFMLALVVILTVVIYGFMAHGVHFLDLFVPPGVPGWLKPLIVAIEVVSFISRPISLSVRLFANMLAGHIALKIFAGFVPALLAAGIWGILSPLPLALSVAITALEMLVAVLQAYVFATLTSIYLSDALHPGH</sequence>
<protein>
    <recommendedName>
        <fullName evidence="1">ATP synthase subunit a</fullName>
    </recommendedName>
    <alternativeName>
        <fullName evidence="1">ATP synthase F0 sector subunit a</fullName>
    </alternativeName>
    <alternativeName>
        <fullName evidence="1">F-ATPase subunit 6</fullName>
    </alternativeName>
</protein>
<reference key="1">
    <citation type="submission" date="2008-02" db="EMBL/GenBank/DDBJ databases">
        <title>Complete sequence of chromosome of Methylobacterium sp. 4-46.</title>
        <authorList>
            <consortium name="US DOE Joint Genome Institute"/>
            <person name="Copeland A."/>
            <person name="Lucas S."/>
            <person name="Lapidus A."/>
            <person name="Glavina del Rio T."/>
            <person name="Dalin E."/>
            <person name="Tice H."/>
            <person name="Bruce D."/>
            <person name="Goodwin L."/>
            <person name="Pitluck S."/>
            <person name="Chertkov O."/>
            <person name="Brettin T."/>
            <person name="Detter J.C."/>
            <person name="Han C."/>
            <person name="Kuske C.R."/>
            <person name="Schmutz J."/>
            <person name="Larimer F."/>
            <person name="Land M."/>
            <person name="Hauser L."/>
            <person name="Kyrpides N."/>
            <person name="Ivanova N."/>
            <person name="Marx C.J."/>
            <person name="Richardson P."/>
        </authorList>
    </citation>
    <scope>NUCLEOTIDE SEQUENCE [LARGE SCALE GENOMIC DNA]</scope>
    <source>
        <strain>4-46</strain>
    </source>
</reference>
<proteinExistence type="inferred from homology"/>